<gene>
    <name evidence="1" type="primary">nqrA</name>
    <name type="ordered locus">Spro_0953</name>
</gene>
<protein>
    <recommendedName>
        <fullName evidence="1">Na(+)-translocating NADH-quinone reductase subunit A</fullName>
        <shortName evidence="1">Na(+)-NQR subunit A</shortName>
        <shortName evidence="1">Na(+)-translocating NQR subunit A</shortName>
        <ecNumber evidence="1">7.2.1.1</ecNumber>
    </recommendedName>
    <alternativeName>
        <fullName evidence="1">NQR complex subunit A</fullName>
    </alternativeName>
    <alternativeName>
        <fullName evidence="1">NQR-1 subunit A</fullName>
    </alternativeName>
</protein>
<organism>
    <name type="scientific">Serratia proteamaculans (strain 568)</name>
    <dbReference type="NCBI Taxonomy" id="399741"/>
    <lineage>
        <taxon>Bacteria</taxon>
        <taxon>Pseudomonadati</taxon>
        <taxon>Pseudomonadota</taxon>
        <taxon>Gammaproteobacteria</taxon>
        <taxon>Enterobacterales</taxon>
        <taxon>Yersiniaceae</taxon>
        <taxon>Serratia</taxon>
    </lineage>
</organism>
<name>NQRA_SERP5</name>
<reference key="1">
    <citation type="submission" date="2007-09" db="EMBL/GenBank/DDBJ databases">
        <title>Complete sequence of chromosome of Serratia proteamaculans 568.</title>
        <authorList>
            <consortium name="US DOE Joint Genome Institute"/>
            <person name="Copeland A."/>
            <person name="Lucas S."/>
            <person name="Lapidus A."/>
            <person name="Barry K."/>
            <person name="Glavina del Rio T."/>
            <person name="Dalin E."/>
            <person name="Tice H."/>
            <person name="Pitluck S."/>
            <person name="Chain P."/>
            <person name="Malfatti S."/>
            <person name="Shin M."/>
            <person name="Vergez L."/>
            <person name="Schmutz J."/>
            <person name="Larimer F."/>
            <person name="Land M."/>
            <person name="Hauser L."/>
            <person name="Kyrpides N."/>
            <person name="Kim E."/>
            <person name="Taghavi S."/>
            <person name="Newman L."/>
            <person name="Vangronsveld J."/>
            <person name="van der Lelie D."/>
            <person name="Richardson P."/>
        </authorList>
    </citation>
    <scope>NUCLEOTIDE SEQUENCE [LARGE SCALE GENOMIC DNA]</scope>
    <source>
        <strain>568</strain>
    </source>
</reference>
<keyword id="KW-0406">Ion transport</keyword>
<keyword id="KW-0520">NAD</keyword>
<keyword id="KW-0915">Sodium</keyword>
<keyword id="KW-0739">Sodium transport</keyword>
<keyword id="KW-1278">Translocase</keyword>
<keyword id="KW-0813">Transport</keyword>
<keyword id="KW-0830">Ubiquinone</keyword>
<proteinExistence type="inferred from homology"/>
<evidence type="ECO:0000255" key="1">
    <source>
        <dbReference type="HAMAP-Rule" id="MF_00425"/>
    </source>
</evidence>
<sequence>MIKIRKGLDLPIAGAPAQAIQDGPIIQHVALLGEDYVGMRPSMLVQEGESVKKGQALFEDKKTPGVFFTAPASGRILSINRGERRVLQSVVIAVENGGDEQLEFAHYPVAELAMLPREQVESELLASGLWTALRTRPFSKTPAPGSTPRAIFVTAMDSQPLAADPQVIIAEQLAAFNAGLAVLARLTDGKVHVCHAAGANLGKQPDAQVTYNEFAGPHPAGLVGTHIHFLEPVSLKKTVWHIGYQDAIAIGTLFTTGKLDTRRVVALAGPQVEQPVLLRTRLGASIDELTAGRLKAGENRVISGSVLSGTHVAGPNAYLGRFHSLVSVLQEGRDKELFGWIAPSPDKFSITRTTLGHFLKNKLFAFSTTTHGGERAMVPIGNYERVMPLDILPTLLLRDLLAGDSDSAQALGCLELDEEDLALCTFVCPGKYEYAPVLRDVLTKIEQEG</sequence>
<accession>A8GAB9</accession>
<feature type="chain" id="PRO_1000060127" description="Na(+)-translocating NADH-quinone reductase subunit A">
    <location>
        <begin position="1"/>
        <end position="449"/>
    </location>
</feature>
<dbReference type="EC" id="7.2.1.1" evidence="1"/>
<dbReference type="EMBL" id="CP000826">
    <property type="protein sequence ID" value="ABV40059.1"/>
    <property type="molecule type" value="Genomic_DNA"/>
</dbReference>
<dbReference type="SMR" id="A8GAB9"/>
<dbReference type="STRING" id="399741.Spro_0953"/>
<dbReference type="KEGG" id="spe:Spro_0953"/>
<dbReference type="eggNOG" id="COG1726">
    <property type="taxonomic scope" value="Bacteria"/>
</dbReference>
<dbReference type="HOGENOM" id="CLU_046656_0_0_6"/>
<dbReference type="OrthoDB" id="9774536at2"/>
<dbReference type="GO" id="GO:0016655">
    <property type="term" value="F:oxidoreductase activity, acting on NAD(P)H, quinone or similar compound as acceptor"/>
    <property type="evidence" value="ECO:0007669"/>
    <property type="project" value="UniProtKB-UniRule"/>
</dbReference>
<dbReference type="GO" id="GO:0006814">
    <property type="term" value="P:sodium ion transport"/>
    <property type="evidence" value="ECO:0007669"/>
    <property type="project" value="UniProtKB-UniRule"/>
</dbReference>
<dbReference type="HAMAP" id="MF_00425">
    <property type="entry name" value="NqrA"/>
    <property type="match status" value="1"/>
</dbReference>
<dbReference type="InterPro" id="IPR008703">
    <property type="entry name" value="NqrA"/>
</dbReference>
<dbReference type="InterPro" id="IPR056148">
    <property type="entry name" value="NQRA_2nd"/>
</dbReference>
<dbReference type="InterPro" id="IPR022615">
    <property type="entry name" value="NqrA_C_domain"/>
</dbReference>
<dbReference type="InterPro" id="IPR056147">
    <property type="entry name" value="NQRA_N"/>
</dbReference>
<dbReference type="NCBIfam" id="TIGR01936">
    <property type="entry name" value="nqrA"/>
    <property type="match status" value="1"/>
</dbReference>
<dbReference type="NCBIfam" id="NF003759">
    <property type="entry name" value="PRK05352.1-2"/>
    <property type="match status" value="1"/>
</dbReference>
<dbReference type="PANTHER" id="PTHR37839">
    <property type="entry name" value="NA(+)-TRANSLOCATING NADH-QUINONE REDUCTASE SUBUNIT A"/>
    <property type="match status" value="1"/>
</dbReference>
<dbReference type="PANTHER" id="PTHR37839:SF1">
    <property type="entry name" value="NA(+)-TRANSLOCATING NADH-QUINONE REDUCTASE SUBUNIT A"/>
    <property type="match status" value="1"/>
</dbReference>
<dbReference type="Pfam" id="PF24836">
    <property type="entry name" value="NQRA_2nd"/>
    <property type="match status" value="1"/>
</dbReference>
<dbReference type="Pfam" id="PF05896">
    <property type="entry name" value="NQRA_N"/>
    <property type="match status" value="1"/>
</dbReference>
<dbReference type="Pfam" id="PF11973">
    <property type="entry name" value="NQRA_SLBB"/>
    <property type="match status" value="1"/>
</dbReference>
<comment type="function">
    <text evidence="1">NQR complex catalyzes the reduction of ubiquinone-1 to ubiquinol by two successive reactions, coupled with the transport of Na(+) ions from the cytoplasm to the periplasm. NqrA to NqrE are probably involved in the second step, the conversion of ubisemiquinone to ubiquinol.</text>
</comment>
<comment type="catalytic activity">
    <reaction evidence="1">
        <text>a ubiquinone + n Na(+)(in) + NADH + H(+) = a ubiquinol + n Na(+)(out) + NAD(+)</text>
        <dbReference type="Rhea" id="RHEA:47748"/>
        <dbReference type="Rhea" id="RHEA-COMP:9565"/>
        <dbReference type="Rhea" id="RHEA-COMP:9566"/>
        <dbReference type="ChEBI" id="CHEBI:15378"/>
        <dbReference type="ChEBI" id="CHEBI:16389"/>
        <dbReference type="ChEBI" id="CHEBI:17976"/>
        <dbReference type="ChEBI" id="CHEBI:29101"/>
        <dbReference type="ChEBI" id="CHEBI:57540"/>
        <dbReference type="ChEBI" id="CHEBI:57945"/>
        <dbReference type="EC" id="7.2.1.1"/>
    </reaction>
</comment>
<comment type="subunit">
    <text evidence="1">Composed of six subunits; NqrA, NqrB, NqrC, NqrD, NqrE and NqrF.</text>
</comment>
<comment type="similarity">
    <text evidence="1">Belongs to the NqrA family.</text>
</comment>